<evidence type="ECO:0000250" key="1"/>
<evidence type="ECO:0000255" key="2"/>
<evidence type="ECO:0000256" key="3">
    <source>
        <dbReference type="SAM" id="MobiDB-lite"/>
    </source>
</evidence>
<evidence type="ECO:0000305" key="4"/>
<keyword id="KW-0067">ATP-binding</keyword>
<keyword id="KW-0227">DNA damage</keyword>
<keyword id="KW-0233">DNA recombination</keyword>
<keyword id="KW-0238">DNA-binding</keyword>
<keyword id="KW-0547">Nucleotide-binding</keyword>
<keyword id="KW-1185">Reference proteome</keyword>
<name>RADA_THEAC</name>
<gene>
    <name type="primary">radA</name>
    <name type="ordered locus">Ta1104</name>
</gene>
<dbReference type="EMBL" id="AL445066">
    <property type="protein sequence ID" value="CAC12231.1"/>
    <property type="molecule type" value="Genomic_DNA"/>
</dbReference>
<dbReference type="SMR" id="Q9HJ68"/>
<dbReference type="FunCoup" id="Q9HJ68">
    <property type="interactions" value="126"/>
</dbReference>
<dbReference type="STRING" id="273075.gene:9572325"/>
<dbReference type="PaxDb" id="273075-Ta1104"/>
<dbReference type="EnsemblBacteria" id="CAC12231">
    <property type="protein sequence ID" value="CAC12231"/>
    <property type="gene ID" value="CAC12231"/>
</dbReference>
<dbReference type="KEGG" id="tac:Ta1104"/>
<dbReference type="eggNOG" id="arCOG00415">
    <property type="taxonomic scope" value="Archaea"/>
</dbReference>
<dbReference type="HOGENOM" id="CLU_041732_0_0_2"/>
<dbReference type="InParanoid" id="Q9HJ68"/>
<dbReference type="BRENDA" id="3.6.4.B7">
    <property type="organism ID" value="6324"/>
</dbReference>
<dbReference type="Proteomes" id="UP000001024">
    <property type="component" value="Chromosome"/>
</dbReference>
<dbReference type="GO" id="GO:0005524">
    <property type="term" value="F:ATP binding"/>
    <property type="evidence" value="ECO:0007669"/>
    <property type="project" value="UniProtKB-UniRule"/>
</dbReference>
<dbReference type="GO" id="GO:0016887">
    <property type="term" value="F:ATP hydrolysis activity"/>
    <property type="evidence" value="ECO:0007669"/>
    <property type="project" value="InterPro"/>
</dbReference>
<dbReference type="GO" id="GO:0140664">
    <property type="term" value="F:ATP-dependent DNA damage sensor activity"/>
    <property type="evidence" value="ECO:0007669"/>
    <property type="project" value="InterPro"/>
</dbReference>
<dbReference type="GO" id="GO:0003684">
    <property type="term" value="F:damaged DNA binding"/>
    <property type="evidence" value="ECO:0007669"/>
    <property type="project" value="UniProtKB-UniRule"/>
</dbReference>
<dbReference type="GO" id="GO:0006310">
    <property type="term" value="P:DNA recombination"/>
    <property type="evidence" value="ECO:0007669"/>
    <property type="project" value="UniProtKB-UniRule"/>
</dbReference>
<dbReference type="GO" id="GO:0006281">
    <property type="term" value="P:DNA repair"/>
    <property type="evidence" value="ECO:0007669"/>
    <property type="project" value="UniProtKB-UniRule"/>
</dbReference>
<dbReference type="CDD" id="cd19515">
    <property type="entry name" value="archRadA"/>
    <property type="match status" value="1"/>
</dbReference>
<dbReference type="FunFam" id="3.40.50.300:FF:002052">
    <property type="entry name" value="DNA repair protein RAD51 homolog"/>
    <property type="match status" value="1"/>
</dbReference>
<dbReference type="Gene3D" id="1.10.150.20">
    <property type="entry name" value="5' to 3' exonuclease, C-terminal subdomain"/>
    <property type="match status" value="1"/>
</dbReference>
<dbReference type="Gene3D" id="3.40.50.300">
    <property type="entry name" value="P-loop containing nucleotide triphosphate hydrolases"/>
    <property type="match status" value="1"/>
</dbReference>
<dbReference type="HAMAP" id="MF_00348">
    <property type="entry name" value="RadA_arch"/>
    <property type="match status" value="1"/>
</dbReference>
<dbReference type="InterPro" id="IPR003593">
    <property type="entry name" value="AAA+_ATPase"/>
</dbReference>
<dbReference type="InterPro" id="IPR013632">
    <property type="entry name" value="DNA_recomb/repair_Rad51_C"/>
</dbReference>
<dbReference type="InterPro" id="IPR011938">
    <property type="entry name" value="DNA_recomb/repair_RadA"/>
</dbReference>
<dbReference type="InterPro" id="IPR016467">
    <property type="entry name" value="DNA_recomb/repair_RecA-like"/>
</dbReference>
<dbReference type="InterPro" id="IPR010995">
    <property type="entry name" value="DNA_repair_Rad51/TF_NusA_a-hlx"/>
</dbReference>
<dbReference type="InterPro" id="IPR003583">
    <property type="entry name" value="Hlx-hairpin-Hlx_DNA-bd_motif"/>
</dbReference>
<dbReference type="InterPro" id="IPR027417">
    <property type="entry name" value="P-loop_NTPase"/>
</dbReference>
<dbReference type="InterPro" id="IPR020588">
    <property type="entry name" value="RecA_ATP-bd"/>
</dbReference>
<dbReference type="InterPro" id="IPR020587">
    <property type="entry name" value="RecA_monomer-monomer_interface"/>
</dbReference>
<dbReference type="NCBIfam" id="NF003301">
    <property type="entry name" value="PRK04301.1"/>
    <property type="match status" value="1"/>
</dbReference>
<dbReference type="NCBIfam" id="TIGR02236">
    <property type="entry name" value="recomb_radA"/>
    <property type="match status" value="1"/>
</dbReference>
<dbReference type="PANTHER" id="PTHR22942:SF30">
    <property type="entry name" value="MEIOTIC RECOMBINATION PROTEIN DMC1_LIM15 HOMOLOG"/>
    <property type="match status" value="1"/>
</dbReference>
<dbReference type="PANTHER" id="PTHR22942">
    <property type="entry name" value="RECA/RAD51/RADA DNA STRAND-PAIRING FAMILY MEMBER"/>
    <property type="match status" value="1"/>
</dbReference>
<dbReference type="Pfam" id="PF14520">
    <property type="entry name" value="HHH_5"/>
    <property type="match status" value="1"/>
</dbReference>
<dbReference type="Pfam" id="PF08423">
    <property type="entry name" value="Rad51"/>
    <property type="match status" value="1"/>
</dbReference>
<dbReference type="PIRSF" id="PIRSF005856">
    <property type="entry name" value="Rad51"/>
    <property type="match status" value="1"/>
</dbReference>
<dbReference type="SMART" id="SM00382">
    <property type="entry name" value="AAA"/>
    <property type="match status" value="1"/>
</dbReference>
<dbReference type="SMART" id="SM00278">
    <property type="entry name" value="HhH1"/>
    <property type="match status" value="2"/>
</dbReference>
<dbReference type="SUPFAM" id="SSF52540">
    <property type="entry name" value="P-loop containing nucleoside triphosphate hydrolases"/>
    <property type="match status" value="1"/>
</dbReference>
<dbReference type="SUPFAM" id="SSF47794">
    <property type="entry name" value="Rad51 N-terminal domain-like"/>
    <property type="match status" value="1"/>
</dbReference>
<dbReference type="PROSITE" id="PS50162">
    <property type="entry name" value="RECA_2"/>
    <property type="match status" value="1"/>
</dbReference>
<dbReference type="PROSITE" id="PS50163">
    <property type="entry name" value="RECA_3"/>
    <property type="match status" value="1"/>
</dbReference>
<organism>
    <name type="scientific">Thermoplasma acidophilum (strain ATCC 25905 / DSM 1728 / JCM 9062 / NBRC 15155 / AMRC-C165)</name>
    <dbReference type="NCBI Taxonomy" id="273075"/>
    <lineage>
        <taxon>Archaea</taxon>
        <taxon>Methanobacteriati</taxon>
        <taxon>Thermoplasmatota</taxon>
        <taxon>Thermoplasmata</taxon>
        <taxon>Thermoplasmatales</taxon>
        <taxon>Thermoplasmataceae</taxon>
        <taxon>Thermoplasma</taxon>
    </lineage>
</organism>
<comment type="function">
    <text evidence="1">Involved in DNA repair and in homologous recombination. Binds and assemble on single-stranded DNA to form a nucleoprotein filament. Hydrolyzes ATP in a ssDNA-dependent manner and promotes DNA strand exchange between homologous DNA molecules (By similarity).</text>
</comment>
<comment type="similarity">
    <text evidence="4">Belongs to the eukaryotic RecA-like protein family.</text>
</comment>
<sequence>MMESNEENREKKTIEDLPGVGEATAEKLRENGYDDIMAIAVASPKDLSDVTGIGEGAAAKIIAAARKFADIGNFETGEEILERRKSIQKLTTGSKNLDDLLGGGLETQAITEFFGEFGSGKTQIMHQLAVNCTLPKEKGGFDSDVMMIDTENTFRPERIIQMAKSKGADPDETLKRIHVARAYNSHHQILLAEKAQDTAKEYNIKLLIVDSLTAHFRSEYVGRGSLAERQQLLNKHMHDLLRFGTIYNAVIAVTNQVSARPDVFFGDPMAPIGGNIVGHTATFRIYLRKSKGGKRIARLIDSPYLPEGETVIQISEEGVSDGT</sequence>
<reference key="1">
    <citation type="journal article" date="2000" name="Nature">
        <title>The genome sequence of the thermoacidophilic scavenger Thermoplasma acidophilum.</title>
        <authorList>
            <person name="Ruepp A."/>
            <person name="Graml W."/>
            <person name="Santos-Martinez M.-L."/>
            <person name="Koretke K.K."/>
            <person name="Volker C."/>
            <person name="Mewes H.-W."/>
            <person name="Frishman D."/>
            <person name="Stocker S."/>
            <person name="Lupas A.N."/>
            <person name="Baumeister W."/>
        </authorList>
    </citation>
    <scope>NUCLEOTIDE SEQUENCE [LARGE SCALE GENOMIC DNA]</scope>
    <source>
        <strain>ATCC 25905 / DSM 1728 / JCM 9062 / NBRC 15155 / AMRC-C165</strain>
    </source>
</reference>
<feature type="chain" id="PRO_0000150109" description="DNA repair and recombination protein RadA">
    <location>
        <begin position="1"/>
        <end position="323"/>
    </location>
</feature>
<feature type="region of interest" description="Disordered" evidence="3">
    <location>
        <begin position="1"/>
        <end position="21"/>
    </location>
</feature>
<feature type="compositionally biased region" description="Basic and acidic residues" evidence="3">
    <location>
        <begin position="1"/>
        <end position="15"/>
    </location>
</feature>
<feature type="binding site" evidence="2">
    <location>
        <begin position="115"/>
        <end position="122"/>
    </location>
    <ligand>
        <name>ATP</name>
        <dbReference type="ChEBI" id="CHEBI:30616"/>
    </ligand>
</feature>
<proteinExistence type="inferred from homology"/>
<accession>Q9HJ68</accession>
<protein>
    <recommendedName>
        <fullName>DNA repair and recombination protein RadA</fullName>
    </recommendedName>
</protein>